<evidence type="ECO:0000255" key="1">
    <source>
        <dbReference type="HAMAP-Rule" id="MF_01101"/>
    </source>
</evidence>
<dbReference type="EMBL" id="CP000647">
    <property type="protein sequence ID" value="ABR78103.1"/>
    <property type="molecule type" value="Genomic_DNA"/>
</dbReference>
<dbReference type="STRING" id="272620.KPN_02686"/>
<dbReference type="PaxDb" id="272620-KPN_02686"/>
<dbReference type="EnsemblBacteria" id="ABR78103">
    <property type="protein sequence ID" value="ABR78103"/>
    <property type="gene ID" value="KPN_02686"/>
</dbReference>
<dbReference type="KEGG" id="kpn:KPN_02686"/>
<dbReference type="HOGENOM" id="CLU_128746_0_0_6"/>
<dbReference type="Proteomes" id="UP000000265">
    <property type="component" value="Chromosome"/>
</dbReference>
<dbReference type="GO" id="GO:0005886">
    <property type="term" value="C:plasma membrane"/>
    <property type="evidence" value="ECO:0007669"/>
    <property type="project" value="UniProtKB-SubCell"/>
</dbReference>
<dbReference type="HAMAP" id="MF_01101">
    <property type="entry name" value="UPF0208"/>
    <property type="match status" value="1"/>
</dbReference>
<dbReference type="InterPro" id="IPR007334">
    <property type="entry name" value="UPF0208"/>
</dbReference>
<dbReference type="NCBIfam" id="NF002493">
    <property type="entry name" value="PRK01816.1"/>
    <property type="match status" value="1"/>
</dbReference>
<dbReference type="Pfam" id="PF04217">
    <property type="entry name" value="DUF412"/>
    <property type="match status" value="1"/>
</dbReference>
<organism>
    <name type="scientific">Klebsiella pneumoniae subsp. pneumoniae (strain ATCC 700721 / MGH 78578)</name>
    <dbReference type="NCBI Taxonomy" id="272620"/>
    <lineage>
        <taxon>Bacteria</taxon>
        <taxon>Pseudomonadati</taxon>
        <taxon>Pseudomonadota</taxon>
        <taxon>Gammaproteobacteria</taxon>
        <taxon>Enterobacterales</taxon>
        <taxon>Enterobacteriaceae</taxon>
        <taxon>Klebsiella/Raoultella group</taxon>
        <taxon>Klebsiella</taxon>
        <taxon>Klebsiella pneumoniae complex</taxon>
    </lineage>
</organism>
<sequence>MSTPEKRPVSFFSLFNRGQHYAKTWPLDKRLAPVFIENRIIRATRYAIRIMPPIAIFTLCWQIALGGQLGPAVATALFALSLPMQGLWWLGKRSVTPLPPSILNWFYEVRGKLQEAGQALAPVEGKPDYQALADTLKRAFKQLDKTFLDDL</sequence>
<keyword id="KW-0997">Cell inner membrane</keyword>
<keyword id="KW-1003">Cell membrane</keyword>
<keyword id="KW-0472">Membrane</keyword>
<keyword id="KW-0812">Transmembrane</keyword>
<keyword id="KW-1133">Transmembrane helix</keyword>
<reference key="1">
    <citation type="submission" date="2006-09" db="EMBL/GenBank/DDBJ databases">
        <authorList>
            <consortium name="The Klebsiella pneumonia Genome Sequencing Project"/>
            <person name="McClelland M."/>
            <person name="Sanderson E.K."/>
            <person name="Spieth J."/>
            <person name="Clifton W.S."/>
            <person name="Latreille P."/>
            <person name="Sabo A."/>
            <person name="Pepin K."/>
            <person name="Bhonagiri V."/>
            <person name="Porwollik S."/>
            <person name="Ali J."/>
            <person name="Wilson R.K."/>
        </authorList>
    </citation>
    <scope>NUCLEOTIDE SEQUENCE [LARGE SCALE GENOMIC DNA]</scope>
    <source>
        <strain>ATCC 700721 / MGH 78578</strain>
    </source>
</reference>
<gene>
    <name type="ordered locus">KPN78578_26420</name>
    <name type="ORF">KPN_02686</name>
</gene>
<proteinExistence type="inferred from homology"/>
<accession>A6TBY2</accession>
<protein>
    <recommendedName>
        <fullName evidence="1">UPF0208 membrane protein KPN78578_26420</fullName>
    </recommendedName>
</protein>
<comment type="subcellular location">
    <subcellularLocation>
        <location evidence="1">Cell inner membrane</location>
        <topology evidence="1">Multi-pass membrane protein</topology>
    </subcellularLocation>
</comment>
<comment type="similarity">
    <text evidence="1">Belongs to the UPF0208 family.</text>
</comment>
<feature type="chain" id="PRO_1000064976" description="UPF0208 membrane protein KPN78578_26420">
    <location>
        <begin position="1"/>
        <end position="151"/>
    </location>
</feature>
<feature type="transmembrane region" description="Helical" evidence="1">
    <location>
        <begin position="46"/>
        <end position="65"/>
    </location>
</feature>
<feature type="transmembrane region" description="Helical" evidence="1">
    <location>
        <begin position="69"/>
        <end position="91"/>
    </location>
</feature>
<name>Y2642_KLEP7</name>